<accession>A1TJT0</accession>
<reference key="1">
    <citation type="submission" date="2006-12" db="EMBL/GenBank/DDBJ databases">
        <title>Complete sequence of Acidovorax avenae subsp. citrulli AAC00-1.</title>
        <authorList>
            <person name="Copeland A."/>
            <person name="Lucas S."/>
            <person name="Lapidus A."/>
            <person name="Barry K."/>
            <person name="Detter J.C."/>
            <person name="Glavina del Rio T."/>
            <person name="Dalin E."/>
            <person name="Tice H."/>
            <person name="Pitluck S."/>
            <person name="Kiss H."/>
            <person name="Brettin T."/>
            <person name="Bruce D."/>
            <person name="Han C."/>
            <person name="Tapia R."/>
            <person name="Gilna P."/>
            <person name="Schmutz J."/>
            <person name="Larimer F."/>
            <person name="Land M."/>
            <person name="Hauser L."/>
            <person name="Kyrpides N."/>
            <person name="Kim E."/>
            <person name="Stahl D."/>
            <person name="Richardson P."/>
        </authorList>
    </citation>
    <scope>NUCLEOTIDE SEQUENCE [LARGE SCALE GENOMIC DNA]</scope>
    <source>
        <strain>AAC00-1</strain>
    </source>
</reference>
<evidence type="ECO:0000255" key="1">
    <source>
        <dbReference type="HAMAP-Rule" id="MF_00537"/>
    </source>
</evidence>
<evidence type="ECO:0000256" key="2">
    <source>
        <dbReference type="SAM" id="MobiDB-lite"/>
    </source>
</evidence>
<evidence type="ECO:0000305" key="3"/>
<gene>
    <name evidence="1" type="primary">rpsN</name>
    <name type="ordered locus">Aave_0614</name>
</gene>
<name>RS14_PARC0</name>
<dbReference type="EMBL" id="CP000512">
    <property type="protein sequence ID" value="ABM31218.1"/>
    <property type="molecule type" value="Genomic_DNA"/>
</dbReference>
<dbReference type="RefSeq" id="WP_011793789.1">
    <property type="nucleotide sequence ID" value="NC_008752.1"/>
</dbReference>
<dbReference type="SMR" id="A1TJT0"/>
<dbReference type="STRING" id="397945.Aave_0614"/>
<dbReference type="GeneID" id="79790328"/>
<dbReference type="KEGG" id="aav:Aave_0614"/>
<dbReference type="eggNOG" id="COG0199">
    <property type="taxonomic scope" value="Bacteria"/>
</dbReference>
<dbReference type="HOGENOM" id="CLU_139869_0_1_4"/>
<dbReference type="OrthoDB" id="9810484at2"/>
<dbReference type="Proteomes" id="UP000002596">
    <property type="component" value="Chromosome"/>
</dbReference>
<dbReference type="GO" id="GO:0005737">
    <property type="term" value="C:cytoplasm"/>
    <property type="evidence" value="ECO:0007669"/>
    <property type="project" value="UniProtKB-ARBA"/>
</dbReference>
<dbReference type="GO" id="GO:0015935">
    <property type="term" value="C:small ribosomal subunit"/>
    <property type="evidence" value="ECO:0007669"/>
    <property type="project" value="TreeGrafter"/>
</dbReference>
<dbReference type="GO" id="GO:0019843">
    <property type="term" value="F:rRNA binding"/>
    <property type="evidence" value="ECO:0007669"/>
    <property type="project" value="UniProtKB-UniRule"/>
</dbReference>
<dbReference type="GO" id="GO:0003735">
    <property type="term" value="F:structural constituent of ribosome"/>
    <property type="evidence" value="ECO:0007669"/>
    <property type="project" value="InterPro"/>
</dbReference>
<dbReference type="GO" id="GO:0006412">
    <property type="term" value="P:translation"/>
    <property type="evidence" value="ECO:0007669"/>
    <property type="project" value="UniProtKB-UniRule"/>
</dbReference>
<dbReference type="FunFam" id="1.10.287.1480:FF:000001">
    <property type="entry name" value="30S ribosomal protein S14"/>
    <property type="match status" value="1"/>
</dbReference>
<dbReference type="Gene3D" id="1.10.287.1480">
    <property type="match status" value="1"/>
</dbReference>
<dbReference type="HAMAP" id="MF_00537">
    <property type="entry name" value="Ribosomal_uS14_1"/>
    <property type="match status" value="1"/>
</dbReference>
<dbReference type="InterPro" id="IPR001209">
    <property type="entry name" value="Ribosomal_uS14"/>
</dbReference>
<dbReference type="InterPro" id="IPR023036">
    <property type="entry name" value="Ribosomal_uS14_bac/plastid"/>
</dbReference>
<dbReference type="NCBIfam" id="NF006477">
    <property type="entry name" value="PRK08881.1"/>
    <property type="match status" value="1"/>
</dbReference>
<dbReference type="PANTHER" id="PTHR19836">
    <property type="entry name" value="30S RIBOSOMAL PROTEIN S14"/>
    <property type="match status" value="1"/>
</dbReference>
<dbReference type="PANTHER" id="PTHR19836:SF19">
    <property type="entry name" value="SMALL RIBOSOMAL SUBUNIT PROTEIN US14M"/>
    <property type="match status" value="1"/>
</dbReference>
<dbReference type="Pfam" id="PF00253">
    <property type="entry name" value="Ribosomal_S14"/>
    <property type="match status" value="1"/>
</dbReference>
<dbReference type="SUPFAM" id="SSF57716">
    <property type="entry name" value="Glucocorticoid receptor-like (DNA-binding domain)"/>
    <property type="match status" value="1"/>
</dbReference>
<sequence length="101" mass="11366">MAKVALIQRELKREKLAAKYAAKYAELKAIASDAKRSDEEREAARLGLQKLPRNANPTRQRNRCEITGRPRGTFRQFGLARAKIRELAFAGDIPGVTKASW</sequence>
<feature type="chain" id="PRO_1000128273" description="Small ribosomal subunit protein uS14">
    <location>
        <begin position="1"/>
        <end position="101"/>
    </location>
</feature>
<feature type="region of interest" description="Disordered" evidence="2">
    <location>
        <begin position="32"/>
        <end position="67"/>
    </location>
</feature>
<feature type="compositionally biased region" description="Basic and acidic residues" evidence="2">
    <location>
        <begin position="33"/>
        <end position="44"/>
    </location>
</feature>
<organism>
    <name type="scientific">Paracidovorax citrulli (strain AAC00-1)</name>
    <name type="common">Acidovorax citrulli</name>
    <dbReference type="NCBI Taxonomy" id="397945"/>
    <lineage>
        <taxon>Bacteria</taxon>
        <taxon>Pseudomonadati</taxon>
        <taxon>Pseudomonadota</taxon>
        <taxon>Betaproteobacteria</taxon>
        <taxon>Burkholderiales</taxon>
        <taxon>Comamonadaceae</taxon>
        <taxon>Paracidovorax</taxon>
    </lineage>
</organism>
<protein>
    <recommendedName>
        <fullName evidence="1">Small ribosomal subunit protein uS14</fullName>
    </recommendedName>
    <alternativeName>
        <fullName evidence="3">30S ribosomal protein S14</fullName>
    </alternativeName>
</protein>
<comment type="function">
    <text evidence="1">Binds 16S rRNA, required for the assembly of 30S particles and may also be responsible for determining the conformation of the 16S rRNA at the A site.</text>
</comment>
<comment type="subunit">
    <text evidence="1">Part of the 30S ribosomal subunit. Contacts proteins S3 and S10.</text>
</comment>
<comment type="similarity">
    <text evidence="1">Belongs to the universal ribosomal protein uS14 family.</text>
</comment>
<proteinExistence type="inferred from homology"/>
<keyword id="KW-0687">Ribonucleoprotein</keyword>
<keyword id="KW-0689">Ribosomal protein</keyword>
<keyword id="KW-0694">RNA-binding</keyword>
<keyword id="KW-0699">rRNA-binding</keyword>